<proteinExistence type="inferred from homology"/>
<evidence type="ECO:0000255" key="1"/>
<evidence type="ECO:0000269" key="2">
    <source>
    </source>
</evidence>
<evidence type="ECO:0000305" key="3"/>
<keyword id="KW-0472">Membrane</keyword>
<keyword id="KW-1185">Reference proteome</keyword>
<keyword id="KW-0812">Transmembrane</keyword>
<keyword id="KW-1133">Transmembrane helix</keyword>
<keyword id="KW-0926">Vacuole</keyword>
<reference key="1">
    <citation type="journal article" date="2002" name="Nature">
        <title>The genome sequence of Schizosaccharomyces pombe.</title>
        <authorList>
            <person name="Wood V."/>
            <person name="Gwilliam R."/>
            <person name="Rajandream M.A."/>
            <person name="Lyne M.H."/>
            <person name="Lyne R."/>
            <person name="Stewart A."/>
            <person name="Sgouros J.G."/>
            <person name="Peat N."/>
            <person name="Hayles J."/>
            <person name="Baker S.G."/>
            <person name="Basham D."/>
            <person name="Bowman S."/>
            <person name="Brooks K."/>
            <person name="Brown D."/>
            <person name="Brown S."/>
            <person name="Chillingworth T."/>
            <person name="Churcher C.M."/>
            <person name="Collins M."/>
            <person name="Connor R."/>
            <person name="Cronin A."/>
            <person name="Davis P."/>
            <person name="Feltwell T."/>
            <person name="Fraser A."/>
            <person name="Gentles S."/>
            <person name="Goble A."/>
            <person name="Hamlin N."/>
            <person name="Harris D.E."/>
            <person name="Hidalgo J."/>
            <person name="Hodgson G."/>
            <person name="Holroyd S."/>
            <person name="Hornsby T."/>
            <person name="Howarth S."/>
            <person name="Huckle E.J."/>
            <person name="Hunt S."/>
            <person name="Jagels K."/>
            <person name="James K.D."/>
            <person name="Jones L."/>
            <person name="Jones M."/>
            <person name="Leather S."/>
            <person name="McDonald S."/>
            <person name="McLean J."/>
            <person name="Mooney P."/>
            <person name="Moule S."/>
            <person name="Mungall K.L."/>
            <person name="Murphy L.D."/>
            <person name="Niblett D."/>
            <person name="Odell C."/>
            <person name="Oliver K."/>
            <person name="O'Neil S."/>
            <person name="Pearson D."/>
            <person name="Quail M.A."/>
            <person name="Rabbinowitsch E."/>
            <person name="Rutherford K.M."/>
            <person name="Rutter S."/>
            <person name="Saunders D."/>
            <person name="Seeger K."/>
            <person name="Sharp S."/>
            <person name="Skelton J."/>
            <person name="Simmonds M.N."/>
            <person name="Squares R."/>
            <person name="Squares S."/>
            <person name="Stevens K."/>
            <person name="Taylor K."/>
            <person name="Taylor R.G."/>
            <person name="Tivey A."/>
            <person name="Walsh S.V."/>
            <person name="Warren T."/>
            <person name="Whitehead S."/>
            <person name="Woodward J.R."/>
            <person name="Volckaert G."/>
            <person name="Aert R."/>
            <person name="Robben J."/>
            <person name="Grymonprez B."/>
            <person name="Weltjens I."/>
            <person name="Vanstreels E."/>
            <person name="Rieger M."/>
            <person name="Schaefer M."/>
            <person name="Mueller-Auer S."/>
            <person name="Gabel C."/>
            <person name="Fuchs M."/>
            <person name="Duesterhoeft A."/>
            <person name="Fritzc C."/>
            <person name="Holzer E."/>
            <person name="Moestl D."/>
            <person name="Hilbert H."/>
            <person name="Borzym K."/>
            <person name="Langer I."/>
            <person name="Beck A."/>
            <person name="Lehrach H."/>
            <person name="Reinhardt R."/>
            <person name="Pohl T.M."/>
            <person name="Eger P."/>
            <person name="Zimmermann W."/>
            <person name="Wedler H."/>
            <person name="Wambutt R."/>
            <person name="Purnelle B."/>
            <person name="Goffeau A."/>
            <person name="Cadieu E."/>
            <person name="Dreano S."/>
            <person name="Gloux S."/>
            <person name="Lelaure V."/>
            <person name="Mottier S."/>
            <person name="Galibert F."/>
            <person name="Aves S.J."/>
            <person name="Xiang Z."/>
            <person name="Hunt C."/>
            <person name="Moore K."/>
            <person name="Hurst S.M."/>
            <person name="Lucas M."/>
            <person name="Rochet M."/>
            <person name="Gaillardin C."/>
            <person name="Tallada V.A."/>
            <person name="Garzon A."/>
            <person name="Thode G."/>
            <person name="Daga R.R."/>
            <person name="Cruzado L."/>
            <person name="Jimenez J."/>
            <person name="Sanchez M."/>
            <person name="del Rey F."/>
            <person name="Benito J."/>
            <person name="Dominguez A."/>
            <person name="Revuelta J.L."/>
            <person name="Moreno S."/>
            <person name="Armstrong J."/>
            <person name="Forsburg S.L."/>
            <person name="Cerutti L."/>
            <person name="Lowe T."/>
            <person name="McCombie W.R."/>
            <person name="Paulsen I."/>
            <person name="Potashkin J."/>
            <person name="Shpakovski G.V."/>
            <person name="Ussery D."/>
            <person name="Barrell B.G."/>
            <person name="Nurse P."/>
        </authorList>
    </citation>
    <scope>NUCLEOTIDE SEQUENCE [LARGE SCALE GENOMIC DNA]</scope>
    <source>
        <strain>972 / ATCC 24843</strain>
    </source>
</reference>
<reference key="2">
    <citation type="journal article" date="2006" name="Nat. Biotechnol.">
        <title>ORFeome cloning and global analysis of protein localization in the fission yeast Schizosaccharomyces pombe.</title>
        <authorList>
            <person name="Matsuyama A."/>
            <person name="Arai R."/>
            <person name="Yashiroda Y."/>
            <person name="Shirai A."/>
            <person name="Kamata A."/>
            <person name="Sekido S."/>
            <person name="Kobayashi Y."/>
            <person name="Hashimoto A."/>
            <person name="Hamamoto M."/>
            <person name="Hiraoka Y."/>
            <person name="Horinouchi S."/>
            <person name="Yoshida M."/>
        </authorList>
    </citation>
    <scope>SUBCELLULAR LOCATION [LARGE SCALE ANALYSIS]</scope>
</reference>
<organism>
    <name type="scientific">Schizosaccharomyces pombe (strain 972 / ATCC 24843)</name>
    <name type="common">Fission yeast</name>
    <dbReference type="NCBI Taxonomy" id="284812"/>
    <lineage>
        <taxon>Eukaryota</taxon>
        <taxon>Fungi</taxon>
        <taxon>Dikarya</taxon>
        <taxon>Ascomycota</taxon>
        <taxon>Taphrinomycotina</taxon>
        <taxon>Schizosaccharomycetes</taxon>
        <taxon>Schizosaccharomycetales</taxon>
        <taxon>Schizosaccharomycetaceae</taxon>
        <taxon>Schizosaccharomyces</taxon>
    </lineage>
</organism>
<sequence>MNKKDKKFNYIFGSEIVNDVKKRLPYYKSDWIDACHYRVLPACLNIYFSNLLPELAFALDMFAKTNNSFGVNEVLLASVLGSVVFALLSSQPLCIVGVTGPITVFNYTVYDIMHDRGTPYFPFLCWICLWSMIFHFIIAIANGVYFVKHITKFSCEIFGLYVAFIYLEKGVQVLCDQLKYGLTNTFLSITIALLFLMVGWLCDTVGKSSLFSYKVRILLLDYGLVASIIFFSGFQHIGKMREVSLAKLPTTKAFEPTLSRSWFIKFWKIPVGDVFLAIPFSIVLTILFYFDHNVSSVMAQDPSFPLTKPAGFHWDFFLLGITTGVSGILGIPAPNGLIPQAPMHTAALCVKRVDYDEDEIEKTHKEVIDRVVEQRASNFIQGLMTVGTMTGPLLLVLHQIPQCVLAGLFWVMGFSAIFGNGITQNVIWMLSDRKVVSKNHTLNHCSSKRVVWLYTILQLIGFGATFAITQVDKASIGFPIIILLLIPFRTYCMPKWFLEEDLEILDENVGIIAYQKV</sequence>
<name>YHW5_SCHPO</name>
<gene>
    <name type="ORF">SPBC543.05c</name>
</gene>
<dbReference type="EMBL" id="CU329671">
    <property type="protein sequence ID" value="CAC05247.1"/>
    <property type="molecule type" value="Genomic_DNA"/>
</dbReference>
<dbReference type="SMR" id="Q9HGM6"/>
<dbReference type="BioGRID" id="276792">
    <property type="interactions" value="10"/>
</dbReference>
<dbReference type="FunCoup" id="Q9HGM6">
    <property type="interactions" value="158"/>
</dbReference>
<dbReference type="STRING" id="284812.Q9HGM6"/>
<dbReference type="PaxDb" id="4896-SPBC543.05c.1"/>
<dbReference type="EnsemblFungi" id="SPBC543.05c.1">
    <property type="protein sequence ID" value="SPBC543.05c.1:pep"/>
    <property type="gene ID" value="SPBC543.05c"/>
</dbReference>
<dbReference type="KEGG" id="spo:2540261"/>
<dbReference type="PomBase" id="SPBC543.05c"/>
<dbReference type="VEuPathDB" id="FungiDB:SPBC543.05c"/>
<dbReference type="eggNOG" id="KOG1172">
    <property type="taxonomic scope" value="Eukaryota"/>
</dbReference>
<dbReference type="HOGENOM" id="CLU_002289_7_2_1"/>
<dbReference type="InParanoid" id="Q9HGM6"/>
<dbReference type="OMA" id="RRAPFYW"/>
<dbReference type="PhylomeDB" id="Q9HGM6"/>
<dbReference type="PRO" id="PR:Q9HGM6"/>
<dbReference type="Proteomes" id="UP000002485">
    <property type="component" value="Chromosome II"/>
</dbReference>
<dbReference type="GO" id="GO:0000324">
    <property type="term" value="C:fungal-type vacuole"/>
    <property type="evidence" value="ECO:0007005"/>
    <property type="project" value="PomBase"/>
</dbReference>
<dbReference type="GO" id="GO:0005886">
    <property type="term" value="C:plasma membrane"/>
    <property type="evidence" value="ECO:0000318"/>
    <property type="project" value="GO_Central"/>
</dbReference>
<dbReference type="GO" id="GO:0005774">
    <property type="term" value="C:vacuolar membrane"/>
    <property type="evidence" value="ECO:0007669"/>
    <property type="project" value="UniProtKB-SubCell"/>
</dbReference>
<dbReference type="GO" id="GO:0046715">
    <property type="term" value="F:active borate transmembrane transporter activity"/>
    <property type="evidence" value="ECO:0000266"/>
    <property type="project" value="PomBase"/>
</dbReference>
<dbReference type="GO" id="GO:0080139">
    <property type="term" value="F:borate efflux transmembrane transporter activity"/>
    <property type="evidence" value="ECO:0000318"/>
    <property type="project" value="GO_Central"/>
</dbReference>
<dbReference type="GO" id="GO:0005452">
    <property type="term" value="F:solute:inorganic anion antiporter activity"/>
    <property type="evidence" value="ECO:0007669"/>
    <property type="project" value="InterPro"/>
</dbReference>
<dbReference type="GO" id="GO:0140159">
    <property type="term" value="P:borate export across plasma membrane"/>
    <property type="evidence" value="ECO:0000266"/>
    <property type="project" value="PomBase"/>
</dbReference>
<dbReference type="GO" id="GO:0046713">
    <property type="term" value="P:borate transport"/>
    <property type="evidence" value="ECO:0000318"/>
    <property type="project" value="GO_Central"/>
</dbReference>
<dbReference type="GO" id="GO:0006820">
    <property type="term" value="P:monoatomic anion transport"/>
    <property type="evidence" value="ECO:0000303"/>
    <property type="project" value="PomBase"/>
</dbReference>
<dbReference type="GO" id="GO:0050801">
    <property type="term" value="P:monoatomic ion homeostasis"/>
    <property type="evidence" value="ECO:0000318"/>
    <property type="project" value="GO_Central"/>
</dbReference>
<dbReference type="GO" id="GO:0055085">
    <property type="term" value="P:transmembrane transport"/>
    <property type="evidence" value="ECO:0000318"/>
    <property type="project" value="GO_Central"/>
</dbReference>
<dbReference type="FunFam" id="1.10.287.570:FF:000003">
    <property type="entry name" value="Anion exchange family protein"/>
    <property type="match status" value="1"/>
</dbReference>
<dbReference type="Gene3D" id="1.10.287.570">
    <property type="entry name" value="Helical hairpin bin"/>
    <property type="match status" value="1"/>
</dbReference>
<dbReference type="InterPro" id="IPR011531">
    <property type="entry name" value="HCO3_transpt-like_TM_dom"/>
</dbReference>
<dbReference type="InterPro" id="IPR003020">
    <property type="entry name" value="HCO3_transpt_euk"/>
</dbReference>
<dbReference type="PANTHER" id="PTHR11453">
    <property type="entry name" value="ANION EXCHANGE PROTEIN"/>
    <property type="match status" value="1"/>
</dbReference>
<dbReference type="PANTHER" id="PTHR11453:SF82">
    <property type="entry name" value="BORON TRANSPORTER 1"/>
    <property type="match status" value="1"/>
</dbReference>
<dbReference type="Pfam" id="PF00955">
    <property type="entry name" value="HCO3_cotransp"/>
    <property type="match status" value="2"/>
</dbReference>
<feature type="chain" id="PRO_0000316208" description="Putative transporter C543.05c">
    <location>
        <begin position="1"/>
        <end position="517"/>
    </location>
</feature>
<feature type="transmembrane region" description="Helical" evidence="1">
    <location>
        <begin position="68"/>
        <end position="88"/>
    </location>
</feature>
<feature type="transmembrane region" description="Helical" evidence="1">
    <location>
        <begin position="93"/>
        <end position="113"/>
    </location>
</feature>
<feature type="transmembrane region" description="Helical" evidence="1">
    <location>
        <begin position="121"/>
        <end position="141"/>
    </location>
</feature>
<feature type="transmembrane region" description="Helical" evidence="1">
    <location>
        <begin position="155"/>
        <end position="175"/>
    </location>
</feature>
<feature type="transmembrane region" description="Helical" evidence="1">
    <location>
        <begin position="186"/>
        <end position="206"/>
    </location>
</feature>
<feature type="transmembrane region" description="Helical" evidence="1">
    <location>
        <begin position="217"/>
        <end position="237"/>
    </location>
</feature>
<feature type="transmembrane region" description="Helical" evidence="1">
    <location>
        <begin position="269"/>
        <end position="289"/>
    </location>
</feature>
<feature type="transmembrane region" description="Helical" evidence="1">
    <location>
        <begin position="311"/>
        <end position="331"/>
    </location>
</feature>
<feature type="transmembrane region" description="Helical" evidence="1">
    <location>
        <begin position="377"/>
        <end position="397"/>
    </location>
</feature>
<feature type="transmembrane region" description="Helical" evidence="1">
    <location>
        <begin position="403"/>
        <end position="423"/>
    </location>
</feature>
<feature type="transmembrane region" description="Helical" evidence="1">
    <location>
        <begin position="449"/>
        <end position="471"/>
    </location>
</feature>
<protein>
    <recommendedName>
        <fullName>Putative transporter C543.05c</fullName>
    </recommendedName>
</protein>
<accession>Q9HGM6</accession>
<comment type="subcellular location">
    <subcellularLocation>
        <location evidence="2">Vacuole membrane</location>
        <topology evidence="2">Multi-pass membrane protein</topology>
    </subcellularLocation>
</comment>
<comment type="similarity">
    <text evidence="3">Belongs to the anion exchanger (TC 2.A.31) family.</text>
</comment>